<accession>O94543</accession>
<sequence>MKPRPYSVFLFLHIVFYSLLSAVNGSPSLDYFETCSNFVPRAGIPTFSPYAVIKNFDEVNRMYYIQVVGNLSGVITIVGGNGSHIHAASVYSETYALGKLVTSNTTKLCDVVMDPHSFEVPIKCPWAAGSAAFMVKVPFKSTLSDYSKYELTTLTTRVIVVDGTPEKNVITCMKFGLSTTLYYFYPVISYLVVVSLAYVSFSIIYALFLNPWTGSLDPFKSIFNFNMDPDALRLTSLGFFDFVQYLQFAVSTAQVSVMFPKFYINIMAALSWGTALFRFPIFSEPAEYQFADFADLSVASSSYADYLPKSYGMYSFLDSIGIGTACWLPFLIVMVIYLFAALFVALLVIFLKWLMSRIFNETIAETRWDTWSFIAGSLIRLYFLTYFPTVAYMSFQFVAPPTGYEIIPVLWFIFFGIFIPVYLYMNLAFVEPSSKLLEDQTYLHLFGSIYNSFREERVMFWIFPIAVQFMRGITVGVIGSSGSAQLAIFFILEVANVVAYAYVRPHFPQTSMNTLNTFISTMRLITVILMIPLDPRLKVLGISRDLLAYAILFIHIMVCILFLLLSTQRFMEVSARLLGAKSESKGVPLDRPFGWARVFGINELRRRRLKDPYSNGNTMMFDHSTYNSNEMSVPLTPVSVCSNSLKKDGEAAPPKLFVQTNCIPPVTQASSLVPSKNNTASSSSLMLDSPVTPSSPYSTSQGYSFYRPPKPKSSVRKRDMDQLRALQLDFLNNKPNLLRHDVNYAVREADVYHPHVDTSIDSLSQISSQPFEMRPTAIPPPPKNAFQRAWQIVQSTAKSIWHSDPPKESEKGFVVLRSRPRPNLQKPLPQLHIEPSRDEQYSMERKKTDDSLAESAWSIPHP</sequence>
<reference key="1">
    <citation type="journal article" date="2002" name="Nature">
        <title>The genome sequence of Schizosaccharomyces pombe.</title>
        <authorList>
            <person name="Wood V."/>
            <person name="Gwilliam R."/>
            <person name="Rajandream M.A."/>
            <person name="Lyne M.H."/>
            <person name="Lyne R."/>
            <person name="Stewart A."/>
            <person name="Sgouros J.G."/>
            <person name="Peat N."/>
            <person name="Hayles J."/>
            <person name="Baker S.G."/>
            <person name="Basham D."/>
            <person name="Bowman S."/>
            <person name="Brooks K."/>
            <person name="Brown D."/>
            <person name="Brown S."/>
            <person name="Chillingworth T."/>
            <person name="Churcher C.M."/>
            <person name="Collins M."/>
            <person name="Connor R."/>
            <person name="Cronin A."/>
            <person name="Davis P."/>
            <person name="Feltwell T."/>
            <person name="Fraser A."/>
            <person name="Gentles S."/>
            <person name="Goble A."/>
            <person name="Hamlin N."/>
            <person name="Harris D.E."/>
            <person name="Hidalgo J."/>
            <person name="Hodgson G."/>
            <person name="Holroyd S."/>
            <person name="Hornsby T."/>
            <person name="Howarth S."/>
            <person name="Huckle E.J."/>
            <person name="Hunt S."/>
            <person name="Jagels K."/>
            <person name="James K.D."/>
            <person name="Jones L."/>
            <person name="Jones M."/>
            <person name="Leather S."/>
            <person name="McDonald S."/>
            <person name="McLean J."/>
            <person name="Mooney P."/>
            <person name="Moule S."/>
            <person name="Mungall K.L."/>
            <person name="Murphy L.D."/>
            <person name="Niblett D."/>
            <person name="Odell C."/>
            <person name="Oliver K."/>
            <person name="O'Neil S."/>
            <person name="Pearson D."/>
            <person name="Quail M.A."/>
            <person name="Rabbinowitsch E."/>
            <person name="Rutherford K.M."/>
            <person name="Rutter S."/>
            <person name="Saunders D."/>
            <person name="Seeger K."/>
            <person name="Sharp S."/>
            <person name="Skelton J."/>
            <person name="Simmonds M.N."/>
            <person name="Squares R."/>
            <person name="Squares S."/>
            <person name="Stevens K."/>
            <person name="Taylor K."/>
            <person name="Taylor R.G."/>
            <person name="Tivey A."/>
            <person name="Walsh S.V."/>
            <person name="Warren T."/>
            <person name="Whitehead S."/>
            <person name="Woodward J.R."/>
            <person name="Volckaert G."/>
            <person name="Aert R."/>
            <person name="Robben J."/>
            <person name="Grymonprez B."/>
            <person name="Weltjens I."/>
            <person name="Vanstreels E."/>
            <person name="Rieger M."/>
            <person name="Schaefer M."/>
            <person name="Mueller-Auer S."/>
            <person name="Gabel C."/>
            <person name="Fuchs M."/>
            <person name="Duesterhoeft A."/>
            <person name="Fritzc C."/>
            <person name="Holzer E."/>
            <person name="Moestl D."/>
            <person name="Hilbert H."/>
            <person name="Borzym K."/>
            <person name="Langer I."/>
            <person name="Beck A."/>
            <person name="Lehrach H."/>
            <person name="Reinhardt R."/>
            <person name="Pohl T.M."/>
            <person name="Eger P."/>
            <person name="Zimmermann W."/>
            <person name="Wedler H."/>
            <person name="Wambutt R."/>
            <person name="Purnelle B."/>
            <person name="Goffeau A."/>
            <person name="Cadieu E."/>
            <person name="Dreano S."/>
            <person name="Gloux S."/>
            <person name="Lelaure V."/>
            <person name="Mottier S."/>
            <person name="Galibert F."/>
            <person name="Aves S.J."/>
            <person name="Xiang Z."/>
            <person name="Hunt C."/>
            <person name="Moore K."/>
            <person name="Hurst S.M."/>
            <person name="Lucas M."/>
            <person name="Rochet M."/>
            <person name="Gaillardin C."/>
            <person name="Tallada V.A."/>
            <person name="Garzon A."/>
            <person name="Thode G."/>
            <person name="Daga R.R."/>
            <person name="Cruzado L."/>
            <person name="Jimenez J."/>
            <person name="Sanchez M."/>
            <person name="del Rey F."/>
            <person name="Benito J."/>
            <person name="Dominguez A."/>
            <person name="Revuelta J.L."/>
            <person name="Moreno S."/>
            <person name="Armstrong J."/>
            <person name="Forsburg S.L."/>
            <person name="Cerutti L."/>
            <person name="Lowe T."/>
            <person name="McCombie W.R."/>
            <person name="Paulsen I."/>
            <person name="Potashkin J."/>
            <person name="Shpakovski G.V."/>
            <person name="Ussery D."/>
            <person name="Barrell B.G."/>
            <person name="Nurse P."/>
        </authorList>
    </citation>
    <scope>NUCLEOTIDE SEQUENCE [LARGE SCALE GENOMIC DNA]</scope>
    <source>
        <strain>972 / ATCC 24843</strain>
    </source>
</reference>
<reference key="2">
    <citation type="journal article" date="2006" name="Nat. Biotechnol.">
        <title>ORFeome cloning and global analysis of protein localization in the fission yeast Schizosaccharomyces pombe.</title>
        <authorList>
            <person name="Matsuyama A."/>
            <person name="Arai R."/>
            <person name="Yashiroda Y."/>
            <person name="Shirai A."/>
            <person name="Kamata A."/>
            <person name="Sekido S."/>
            <person name="Kobayashi Y."/>
            <person name="Hashimoto A."/>
            <person name="Hamamoto M."/>
            <person name="Hiraoka Y."/>
            <person name="Horinouchi S."/>
            <person name="Yoshida M."/>
        </authorList>
    </citation>
    <scope>SUBCELLULAR LOCATION [LARGE SCALE ANALYSIS]</scope>
</reference>
<name>YCD3_SCHPO</name>
<comment type="subcellular location">
    <subcellularLocation>
        <location evidence="3">Cytoplasm</location>
    </subcellularLocation>
    <subcellularLocation>
        <location evidence="3">Golgi apparatus membrane</location>
        <topology evidence="3">Multi-pass membrane protein</topology>
    </subcellularLocation>
</comment>
<comment type="similarity">
    <text evidence="4">Belongs to the transient receptor potential (TRP) ion channel family.</text>
</comment>
<gene>
    <name type="ORF">SPCC1322.03</name>
</gene>
<feature type="signal peptide" evidence="1">
    <location>
        <begin position="1"/>
        <end position="25"/>
    </location>
</feature>
<feature type="chain" id="PRO_0000372620" description="Uncharacterized membrane protein C1322.03">
    <location>
        <begin position="26"/>
        <end position="862"/>
    </location>
</feature>
<feature type="topological domain" description="Lumenal" evidence="1">
    <location>
        <begin position="26"/>
        <end position="61"/>
    </location>
</feature>
<feature type="transmembrane region" description="Helical" evidence="1">
    <location>
        <begin position="62"/>
        <end position="82"/>
    </location>
</feature>
<feature type="topological domain" description="Cytoplasmic" evidence="1">
    <location>
        <begin position="83"/>
        <end position="187"/>
    </location>
</feature>
<feature type="transmembrane region" description="Helical" evidence="1">
    <location>
        <begin position="188"/>
        <end position="208"/>
    </location>
</feature>
<feature type="topological domain" description="Lumenal" evidence="1">
    <location>
        <begin position="209"/>
        <end position="230"/>
    </location>
</feature>
<feature type="transmembrane region" description="Helical" evidence="1">
    <location>
        <begin position="231"/>
        <end position="250"/>
    </location>
</feature>
<feature type="topological domain" description="Cytoplasmic" evidence="1">
    <location>
        <begin position="251"/>
        <end position="256"/>
    </location>
</feature>
<feature type="transmembrane region" description="Helical" evidence="1">
    <location>
        <begin position="257"/>
        <end position="277"/>
    </location>
</feature>
<feature type="topological domain" description="Lumenal" evidence="1">
    <location>
        <begin position="278"/>
        <end position="329"/>
    </location>
</feature>
<feature type="transmembrane region" description="Helical" evidence="1">
    <location>
        <begin position="330"/>
        <end position="350"/>
    </location>
</feature>
<feature type="topological domain" description="Cytoplasmic" evidence="1">
    <location>
        <begin position="351"/>
        <end position="372"/>
    </location>
</feature>
<feature type="transmembrane region" description="Helical" evidence="1">
    <location>
        <begin position="373"/>
        <end position="393"/>
    </location>
</feature>
<feature type="topological domain" description="Lumenal" evidence="1">
    <location>
        <begin position="394"/>
        <end position="404"/>
    </location>
</feature>
<feature type="transmembrane region" description="Helical" evidence="1">
    <location>
        <begin position="405"/>
        <end position="425"/>
    </location>
</feature>
<feature type="topological domain" description="Cytoplasmic" evidence="1">
    <location>
        <begin position="426"/>
        <end position="457"/>
    </location>
</feature>
<feature type="transmembrane region" description="Helical" evidence="1">
    <location>
        <begin position="458"/>
        <end position="480"/>
    </location>
</feature>
<feature type="topological domain" description="Lumenal" evidence="1">
    <location>
        <begin position="481"/>
        <end position="483"/>
    </location>
</feature>
<feature type="transmembrane region" description="Helical" evidence="1">
    <location>
        <begin position="484"/>
        <end position="503"/>
    </location>
</feature>
<feature type="topological domain" description="Cytoplasmic" evidence="1">
    <location>
        <begin position="504"/>
        <end position="514"/>
    </location>
</feature>
<feature type="transmembrane region" description="Helical" evidence="1">
    <location>
        <begin position="515"/>
        <end position="535"/>
    </location>
</feature>
<feature type="topological domain" description="Lumenal" evidence="1">
    <location>
        <begin position="536"/>
        <end position="545"/>
    </location>
</feature>
<feature type="transmembrane region" description="Helical" evidence="1">
    <location>
        <begin position="546"/>
        <end position="566"/>
    </location>
</feature>
<feature type="topological domain" description="Cytoplasmic" evidence="1">
    <location>
        <begin position="567"/>
        <end position="862"/>
    </location>
</feature>
<feature type="region of interest" description="Disordered" evidence="2">
    <location>
        <begin position="668"/>
        <end position="717"/>
    </location>
</feature>
<feature type="region of interest" description="Disordered" evidence="2">
    <location>
        <begin position="815"/>
        <end position="862"/>
    </location>
</feature>
<feature type="compositionally biased region" description="Polar residues" evidence="2">
    <location>
        <begin position="668"/>
        <end position="686"/>
    </location>
</feature>
<feature type="compositionally biased region" description="Low complexity" evidence="2">
    <location>
        <begin position="689"/>
        <end position="700"/>
    </location>
</feature>
<feature type="compositionally biased region" description="Basic and acidic residues" evidence="2">
    <location>
        <begin position="834"/>
        <end position="850"/>
    </location>
</feature>
<keyword id="KW-0963">Cytoplasm</keyword>
<keyword id="KW-0333">Golgi apparatus</keyword>
<keyword id="KW-0472">Membrane</keyword>
<keyword id="KW-1185">Reference proteome</keyword>
<keyword id="KW-0732">Signal</keyword>
<keyword id="KW-0812">Transmembrane</keyword>
<keyword id="KW-1133">Transmembrane helix</keyword>
<keyword id="KW-0813">Transport</keyword>
<protein>
    <recommendedName>
        <fullName>Uncharacterized membrane protein C1322.03</fullName>
    </recommendedName>
</protein>
<dbReference type="EMBL" id="CU329672">
    <property type="protein sequence ID" value="CAA22856.1"/>
    <property type="molecule type" value="Genomic_DNA"/>
</dbReference>
<dbReference type="PIR" id="T40934">
    <property type="entry name" value="T40934"/>
</dbReference>
<dbReference type="BioGRID" id="275643">
    <property type="interactions" value="8"/>
</dbReference>
<dbReference type="STRING" id="284812.O94543"/>
<dbReference type="TCDB" id="1.A.131.1.4">
    <property type="family name" value="the putative trp-like channel (p-trpl-ch) family"/>
</dbReference>
<dbReference type="iPTMnet" id="O94543"/>
<dbReference type="PaxDb" id="4896-SPCC1322.03.1"/>
<dbReference type="EnsemblFungi" id="SPCC1322.03.1">
    <property type="protein sequence ID" value="SPCC1322.03.1:pep"/>
    <property type="gene ID" value="SPCC1322.03"/>
</dbReference>
<dbReference type="KEGG" id="spo:2539071"/>
<dbReference type="PomBase" id="SPCC1322.03"/>
<dbReference type="VEuPathDB" id="FungiDB:SPCC1322.03"/>
<dbReference type="eggNOG" id="ENOG502R2RV">
    <property type="taxonomic scope" value="Eukaryota"/>
</dbReference>
<dbReference type="HOGENOM" id="CLU_356839_0_0_1"/>
<dbReference type="InParanoid" id="O94543"/>
<dbReference type="OMA" id="HGFTYPG"/>
<dbReference type="PhylomeDB" id="O94543"/>
<dbReference type="PRO" id="PR:O94543"/>
<dbReference type="Proteomes" id="UP000002485">
    <property type="component" value="Chromosome III"/>
</dbReference>
<dbReference type="GO" id="GO:0005737">
    <property type="term" value="C:cytoplasm"/>
    <property type="evidence" value="ECO:0007005"/>
    <property type="project" value="PomBase"/>
</dbReference>
<dbReference type="GO" id="GO:0005794">
    <property type="term" value="C:Golgi apparatus"/>
    <property type="evidence" value="ECO:0007005"/>
    <property type="project" value="PomBase"/>
</dbReference>
<dbReference type="GO" id="GO:0000139">
    <property type="term" value="C:Golgi membrane"/>
    <property type="evidence" value="ECO:0007669"/>
    <property type="project" value="UniProtKB-SubCell"/>
</dbReference>
<dbReference type="GO" id="GO:0016020">
    <property type="term" value="C:membrane"/>
    <property type="evidence" value="ECO:0000318"/>
    <property type="project" value="GO_Central"/>
</dbReference>
<dbReference type="GO" id="GO:0005886">
    <property type="term" value="C:plasma membrane"/>
    <property type="evidence" value="ECO:0000250"/>
    <property type="project" value="PomBase"/>
</dbReference>
<dbReference type="GO" id="GO:0005262">
    <property type="term" value="F:calcium channel activity"/>
    <property type="evidence" value="ECO:0000315"/>
    <property type="project" value="PomBase"/>
</dbReference>
<dbReference type="GO" id="GO:0098703">
    <property type="term" value="P:calcium ion import across plasma membrane"/>
    <property type="evidence" value="ECO:0000315"/>
    <property type="project" value="PomBase"/>
</dbReference>
<dbReference type="GO" id="GO:0055085">
    <property type="term" value="P:transmembrane transport"/>
    <property type="evidence" value="ECO:0000318"/>
    <property type="project" value="GO_Central"/>
</dbReference>
<dbReference type="InterPro" id="IPR010308">
    <property type="entry name" value="TRP_C"/>
</dbReference>
<dbReference type="InterPro" id="IPR040241">
    <property type="entry name" value="TRP_Flc/Pkd2-like"/>
</dbReference>
<dbReference type="InterPro" id="IPR032800">
    <property type="entry name" value="TRP_N"/>
</dbReference>
<dbReference type="PANTHER" id="PTHR31145">
    <property type="entry name" value="INTEGRAL MEMBRANE PROTEIN (AFU_ORTHOLOGUE AFUA_7G01610)"/>
    <property type="match status" value="1"/>
</dbReference>
<dbReference type="PANTHER" id="PTHR31145:SF6">
    <property type="entry name" value="INTEGRAL MEMBRANE PROTEIN (AFU_ORTHOLOGUE AFUA_7G01610)"/>
    <property type="match status" value="1"/>
</dbReference>
<dbReference type="Pfam" id="PF06011">
    <property type="entry name" value="TRP"/>
    <property type="match status" value="1"/>
</dbReference>
<dbReference type="SMART" id="SM01320">
    <property type="entry name" value="TRP_N"/>
    <property type="match status" value="1"/>
</dbReference>
<evidence type="ECO:0000255" key="1"/>
<evidence type="ECO:0000256" key="2">
    <source>
        <dbReference type="SAM" id="MobiDB-lite"/>
    </source>
</evidence>
<evidence type="ECO:0000269" key="3">
    <source>
    </source>
</evidence>
<evidence type="ECO:0000305" key="4"/>
<organism>
    <name type="scientific">Schizosaccharomyces pombe (strain 972 / ATCC 24843)</name>
    <name type="common">Fission yeast</name>
    <dbReference type="NCBI Taxonomy" id="284812"/>
    <lineage>
        <taxon>Eukaryota</taxon>
        <taxon>Fungi</taxon>
        <taxon>Dikarya</taxon>
        <taxon>Ascomycota</taxon>
        <taxon>Taphrinomycotina</taxon>
        <taxon>Schizosaccharomycetes</taxon>
        <taxon>Schizosaccharomycetales</taxon>
        <taxon>Schizosaccharomycetaceae</taxon>
        <taxon>Schizosaccharomyces</taxon>
    </lineage>
</organism>
<proteinExistence type="inferred from homology"/>